<name>ENO_ENDTX</name>
<comment type="function">
    <text evidence="1">Catalyzes the reversible conversion of 2-phosphoglycerate (2-PG) into phosphoenolpyruvate (PEP). It is essential for the degradation of carbohydrates via glycolysis.</text>
</comment>
<comment type="catalytic activity">
    <reaction evidence="1">
        <text>(2R)-2-phosphoglycerate = phosphoenolpyruvate + H2O</text>
        <dbReference type="Rhea" id="RHEA:10164"/>
        <dbReference type="ChEBI" id="CHEBI:15377"/>
        <dbReference type="ChEBI" id="CHEBI:58289"/>
        <dbReference type="ChEBI" id="CHEBI:58702"/>
        <dbReference type="EC" id="4.2.1.11"/>
    </reaction>
</comment>
<comment type="cofactor">
    <cofactor evidence="1">
        <name>Mg(2+)</name>
        <dbReference type="ChEBI" id="CHEBI:18420"/>
    </cofactor>
    <text evidence="1">Binds a second Mg(2+) ion via substrate during catalysis.</text>
</comment>
<comment type="pathway">
    <text evidence="1">Carbohydrate degradation; glycolysis; pyruvate from D-glyceraldehyde 3-phosphate: step 4/5.</text>
</comment>
<comment type="subcellular location">
    <subcellularLocation>
        <location evidence="1">Cytoplasm</location>
    </subcellularLocation>
    <subcellularLocation>
        <location evidence="1">Secreted</location>
    </subcellularLocation>
    <subcellularLocation>
        <location evidence="1">Cell surface</location>
    </subcellularLocation>
    <text evidence="1">Fractions of enolase are present in both the cytoplasm and on the cell surface.</text>
</comment>
<comment type="similarity">
    <text evidence="1">Belongs to the enolase family.</text>
</comment>
<evidence type="ECO:0000255" key="1">
    <source>
        <dbReference type="HAMAP-Rule" id="MF_00318"/>
    </source>
</evidence>
<sequence>MAKIVKIAGREIIDSRGNPTVEVDVRLGDGTLGRAAVPSGASTGSREALELRDGDKKRFGGKGVLKAVSNVNDIIAPKLTGLEITKQQDIDDIMIKLDGTDFKSSLGANAVLGVSLACAKAGSNSNKLPVYEYVREIYNVKSDKYVLPVPLMNIINGGEHADNNVDLQEFMIAPVSAPTFREALRMGCEVFHGLKKVLNEKGYATGVGDEGGFAPNLKSNAQALEVICEAVKVAGYEVGRDIVFALDVAASELYENNKYTLEGEVKEKVKTSKDMIAFYGDLLKEYPIISIEDGLSESDWDGWKILTEKLKSRLQLVGDDLFVTNTKIFKDGIDKGIANSILIKVNQIGSLSETVAAVQMAYKAGYTAVMSHRSGETEDSIIADLAVALNTGQIKTGSASRTDRMCKYNQLLRIEEELGSKSAYLGKSAFSSIK</sequence>
<protein>
    <recommendedName>
        <fullName evidence="1">Enolase</fullName>
        <ecNumber evidence="1">4.2.1.11</ecNumber>
    </recommendedName>
    <alternativeName>
        <fullName evidence="1">2-phospho-D-glycerate hydro-lyase</fullName>
    </alternativeName>
    <alternativeName>
        <fullName evidence="1">2-phosphoglycerate dehydratase</fullName>
    </alternativeName>
</protein>
<dbReference type="EC" id="4.2.1.11" evidence="1"/>
<dbReference type="EMBL" id="AP009510">
    <property type="protein sequence ID" value="BAG14110.1"/>
    <property type="molecule type" value="Genomic_DNA"/>
</dbReference>
<dbReference type="RefSeq" id="WP_015423634.1">
    <property type="nucleotide sequence ID" value="NC_020419.1"/>
</dbReference>
<dbReference type="SMR" id="B1GYL7"/>
<dbReference type="STRING" id="471821.TGRD_627"/>
<dbReference type="KEGG" id="eti:RSTT_588"/>
<dbReference type="KEGG" id="rsd:TGRD_627"/>
<dbReference type="PATRIC" id="fig|471821.5.peg.1058"/>
<dbReference type="HOGENOM" id="CLU_031223_2_1_0"/>
<dbReference type="OrthoDB" id="9804716at2"/>
<dbReference type="UniPathway" id="UPA00109">
    <property type="reaction ID" value="UER00187"/>
</dbReference>
<dbReference type="Proteomes" id="UP000001691">
    <property type="component" value="Chromosome"/>
</dbReference>
<dbReference type="GO" id="GO:0009986">
    <property type="term" value="C:cell surface"/>
    <property type="evidence" value="ECO:0007669"/>
    <property type="project" value="UniProtKB-SubCell"/>
</dbReference>
<dbReference type="GO" id="GO:0005576">
    <property type="term" value="C:extracellular region"/>
    <property type="evidence" value="ECO:0007669"/>
    <property type="project" value="UniProtKB-SubCell"/>
</dbReference>
<dbReference type="GO" id="GO:0000015">
    <property type="term" value="C:phosphopyruvate hydratase complex"/>
    <property type="evidence" value="ECO:0007669"/>
    <property type="project" value="InterPro"/>
</dbReference>
<dbReference type="GO" id="GO:0000287">
    <property type="term" value="F:magnesium ion binding"/>
    <property type="evidence" value="ECO:0007669"/>
    <property type="project" value="UniProtKB-UniRule"/>
</dbReference>
<dbReference type="GO" id="GO:0004634">
    <property type="term" value="F:phosphopyruvate hydratase activity"/>
    <property type="evidence" value="ECO:0007669"/>
    <property type="project" value="UniProtKB-UniRule"/>
</dbReference>
<dbReference type="GO" id="GO:0006096">
    <property type="term" value="P:glycolytic process"/>
    <property type="evidence" value="ECO:0007669"/>
    <property type="project" value="UniProtKB-UniRule"/>
</dbReference>
<dbReference type="CDD" id="cd03313">
    <property type="entry name" value="enolase"/>
    <property type="match status" value="1"/>
</dbReference>
<dbReference type="FunFam" id="3.20.20.120:FF:000001">
    <property type="entry name" value="Enolase"/>
    <property type="match status" value="1"/>
</dbReference>
<dbReference type="FunFam" id="3.30.390.10:FF:000001">
    <property type="entry name" value="Enolase"/>
    <property type="match status" value="1"/>
</dbReference>
<dbReference type="Gene3D" id="3.20.20.120">
    <property type="entry name" value="Enolase-like C-terminal domain"/>
    <property type="match status" value="1"/>
</dbReference>
<dbReference type="Gene3D" id="3.30.390.10">
    <property type="entry name" value="Enolase-like, N-terminal domain"/>
    <property type="match status" value="1"/>
</dbReference>
<dbReference type="HAMAP" id="MF_00318">
    <property type="entry name" value="Enolase"/>
    <property type="match status" value="1"/>
</dbReference>
<dbReference type="InterPro" id="IPR000941">
    <property type="entry name" value="Enolase"/>
</dbReference>
<dbReference type="InterPro" id="IPR036849">
    <property type="entry name" value="Enolase-like_C_sf"/>
</dbReference>
<dbReference type="InterPro" id="IPR029017">
    <property type="entry name" value="Enolase-like_N"/>
</dbReference>
<dbReference type="InterPro" id="IPR020810">
    <property type="entry name" value="Enolase_C"/>
</dbReference>
<dbReference type="InterPro" id="IPR020809">
    <property type="entry name" value="Enolase_CS"/>
</dbReference>
<dbReference type="InterPro" id="IPR020811">
    <property type="entry name" value="Enolase_N"/>
</dbReference>
<dbReference type="NCBIfam" id="TIGR01060">
    <property type="entry name" value="eno"/>
    <property type="match status" value="1"/>
</dbReference>
<dbReference type="PANTHER" id="PTHR11902">
    <property type="entry name" value="ENOLASE"/>
    <property type="match status" value="1"/>
</dbReference>
<dbReference type="PANTHER" id="PTHR11902:SF1">
    <property type="entry name" value="ENOLASE"/>
    <property type="match status" value="1"/>
</dbReference>
<dbReference type="Pfam" id="PF00113">
    <property type="entry name" value="Enolase_C"/>
    <property type="match status" value="1"/>
</dbReference>
<dbReference type="Pfam" id="PF03952">
    <property type="entry name" value="Enolase_N"/>
    <property type="match status" value="1"/>
</dbReference>
<dbReference type="PIRSF" id="PIRSF001400">
    <property type="entry name" value="Enolase"/>
    <property type="match status" value="1"/>
</dbReference>
<dbReference type="PRINTS" id="PR00148">
    <property type="entry name" value="ENOLASE"/>
</dbReference>
<dbReference type="SFLD" id="SFLDF00002">
    <property type="entry name" value="enolase"/>
    <property type="match status" value="1"/>
</dbReference>
<dbReference type="SFLD" id="SFLDG00178">
    <property type="entry name" value="enolase"/>
    <property type="match status" value="1"/>
</dbReference>
<dbReference type="SMART" id="SM01192">
    <property type="entry name" value="Enolase_C"/>
    <property type="match status" value="1"/>
</dbReference>
<dbReference type="SMART" id="SM01193">
    <property type="entry name" value="Enolase_N"/>
    <property type="match status" value="1"/>
</dbReference>
<dbReference type="SUPFAM" id="SSF51604">
    <property type="entry name" value="Enolase C-terminal domain-like"/>
    <property type="match status" value="1"/>
</dbReference>
<dbReference type="SUPFAM" id="SSF54826">
    <property type="entry name" value="Enolase N-terminal domain-like"/>
    <property type="match status" value="1"/>
</dbReference>
<dbReference type="PROSITE" id="PS00164">
    <property type="entry name" value="ENOLASE"/>
    <property type="match status" value="1"/>
</dbReference>
<proteinExistence type="inferred from homology"/>
<reference key="1">
    <citation type="journal article" date="2008" name="Proc. Natl. Acad. Sci. U.S.A.">
        <title>Complete genome of the uncultured termite group 1 bacteria in a single host protist cell.</title>
        <authorList>
            <person name="Hongoh Y."/>
            <person name="Sharma V.K."/>
            <person name="Prakash T."/>
            <person name="Noda S."/>
            <person name="Taylor T.D."/>
            <person name="Kudo T."/>
            <person name="Sakaki Y."/>
            <person name="Toyoda A."/>
            <person name="Hattori M."/>
            <person name="Ohkuma M."/>
        </authorList>
    </citation>
    <scope>NUCLEOTIDE SEQUENCE [LARGE SCALE GENOMIC DNA]</scope>
</reference>
<gene>
    <name evidence="1" type="primary">eno</name>
    <name type="ordered locus">TGRD_627</name>
</gene>
<accession>B1GYL7</accession>
<feature type="chain" id="PRO_1000119582" description="Enolase">
    <location>
        <begin position="1"/>
        <end position="434"/>
    </location>
</feature>
<feature type="active site" description="Proton donor" evidence="1">
    <location>
        <position position="210"/>
    </location>
</feature>
<feature type="active site" description="Proton acceptor" evidence="1">
    <location>
        <position position="344"/>
    </location>
</feature>
<feature type="binding site" evidence="1">
    <location>
        <position position="168"/>
    </location>
    <ligand>
        <name>(2R)-2-phosphoglycerate</name>
        <dbReference type="ChEBI" id="CHEBI:58289"/>
    </ligand>
</feature>
<feature type="binding site" evidence="1">
    <location>
        <position position="247"/>
    </location>
    <ligand>
        <name>Mg(2+)</name>
        <dbReference type="ChEBI" id="CHEBI:18420"/>
    </ligand>
</feature>
<feature type="binding site" evidence="1">
    <location>
        <position position="292"/>
    </location>
    <ligand>
        <name>Mg(2+)</name>
        <dbReference type="ChEBI" id="CHEBI:18420"/>
    </ligand>
</feature>
<feature type="binding site" evidence="1">
    <location>
        <position position="319"/>
    </location>
    <ligand>
        <name>Mg(2+)</name>
        <dbReference type="ChEBI" id="CHEBI:18420"/>
    </ligand>
</feature>
<feature type="binding site" evidence="1">
    <location>
        <position position="344"/>
    </location>
    <ligand>
        <name>(2R)-2-phosphoglycerate</name>
        <dbReference type="ChEBI" id="CHEBI:58289"/>
    </ligand>
</feature>
<feature type="binding site" evidence="1">
    <location>
        <position position="373"/>
    </location>
    <ligand>
        <name>(2R)-2-phosphoglycerate</name>
        <dbReference type="ChEBI" id="CHEBI:58289"/>
    </ligand>
</feature>
<feature type="binding site" evidence="1">
    <location>
        <position position="374"/>
    </location>
    <ligand>
        <name>(2R)-2-phosphoglycerate</name>
        <dbReference type="ChEBI" id="CHEBI:58289"/>
    </ligand>
</feature>
<feature type="binding site" evidence="1">
    <location>
        <position position="395"/>
    </location>
    <ligand>
        <name>(2R)-2-phosphoglycerate</name>
        <dbReference type="ChEBI" id="CHEBI:58289"/>
    </ligand>
</feature>
<organism>
    <name type="scientific">Endomicrobium trichonymphae</name>
    <dbReference type="NCBI Taxonomy" id="1408204"/>
    <lineage>
        <taxon>Bacteria</taxon>
        <taxon>Pseudomonadati</taxon>
        <taxon>Elusimicrobiota</taxon>
        <taxon>Endomicrobiia</taxon>
        <taxon>Endomicrobiales</taxon>
        <taxon>Endomicrobiaceae</taxon>
        <taxon>Candidatus Endomicrobiellum</taxon>
    </lineage>
</organism>
<keyword id="KW-0963">Cytoplasm</keyword>
<keyword id="KW-0324">Glycolysis</keyword>
<keyword id="KW-0456">Lyase</keyword>
<keyword id="KW-0460">Magnesium</keyword>
<keyword id="KW-0479">Metal-binding</keyword>
<keyword id="KW-0964">Secreted</keyword>